<proteinExistence type="inferred from homology"/>
<feature type="chain" id="PRO_0000222413" description="Major capsid protein">
    <location>
        <begin position="1"/>
        <end position="208"/>
    </location>
</feature>
<feature type="region of interest" description="Disordered" evidence="3">
    <location>
        <begin position="1"/>
        <end position="69"/>
    </location>
</feature>
<feature type="compositionally biased region" description="Low complexity" evidence="3">
    <location>
        <begin position="1"/>
        <end position="16"/>
    </location>
</feature>
<feature type="compositionally biased region" description="Basic residues" evidence="3">
    <location>
        <begin position="17"/>
        <end position="30"/>
    </location>
</feature>
<feature type="compositionally biased region" description="Basic residues" evidence="3">
    <location>
        <begin position="44"/>
        <end position="61"/>
    </location>
</feature>
<reference key="1">
    <citation type="journal article" date="1989" name="FEBS Lett.">
        <title>Nucleotide sequence and organization of potato leafroll virus genomic RNA.</title>
        <authorList>
            <person name="van der Wilk F."/>
            <person name="Huisman M.J."/>
            <person name="Cornelissen B.J.C."/>
            <person name="Huttinga H."/>
            <person name="Goldbach R.W."/>
        </authorList>
    </citation>
    <scope>NUCLEOTIDE SEQUENCE [GENOMIC RNA]</scope>
</reference>
<gene>
    <name type="ORF">ORF3</name>
</gene>
<dbReference type="EMBL" id="Y07496">
    <property type="protein sequence ID" value="CAA68797.1"/>
    <property type="molecule type" value="Genomic_RNA"/>
</dbReference>
<dbReference type="PIR" id="S03549">
    <property type="entry name" value="VCVQWA"/>
</dbReference>
<dbReference type="SMR" id="P11624"/>
<dbReference type="Proteomes" id="UP000000474">
    <property type="component" value="Genome"/>
</dbReference>
<dbReference type="GO" id="GO:0039617">
    <property type="term" value="C:T=3 icosahedral viral capsid"/>
    <property type="evidence" value="ECO:0007669"/>
    <property type="project" value="UniProtKB-KW"/>
</dbReference>
<dbReference type="GO" id="GO:0005198">
    <property type="term" value="F:structural molecule activity"/>
    <property type="evidence" value="ECO:0007669"/>
    <property type="project" value="InterPro"/>
</dbReference>
<dbReference type="Gene3D" id="2.60.120.20">
    <property type="match status" value="1"/>
</dbReference>
<dbReference type="InterPro" id="IPR001517">
    <property type="entry name" value="Luteo_coat"/>
</dbReference>
<dbReference type="InterPro" id="IPR029053">
    <property type="entry name" value="Viral_coat"/>
</dbReference>
<dbReference type="Pfam" id="PF00894">
    <property type="entry name" value="Luteo_coat"/>
    <property type="match status" value="1"/>
</dbReference>
<dbReference type="PRINTS" id="PR00915">
    <property type="entry name" value="LUTEOGP1COAT"/>
</dbReference>
<evidence type="ECO:0000250" key="1">
    <source>
        <dbReference type="UniProtKB" id="P17522"/>
    </source>
</evidence>
<evidence type="ECO:0000250" key="2">
    <source>
        <dbReference type="UniProtKB" id="P17525"/>
    </source>
</evidence>
<evidence type="ECO:0000256" key="3">
    <source>
        <dbReference type="SAM" id="MobiDB-lite"/>
    </source>
</evidence>
<evidence type="ECO:0000305" key="4"/>
<protein>
    <recommendedName>
        <fullName>Major capsid protein</fullName>
    </recommendedName>
    <alternativeName>
        <fullName>Coat protein</fullName>
        <shortName>CP</shortName>
    </alternativeName>
    <alternativeName>
        <fullName evidence="1">P3</fullName>
    </alternativeName>
</protein>
<comment type="function">
    <text evidence="1">Major capsid protein that self-assembles to form an icosahedral capsid with a T=3 symmetry, about 23 nm in diameter, and consisting of 180 capsid proteins monomers. Most of the 180 monomers are the major capsid protein, but a small percentage contain the minor capsid protein, which has a long C-terminal extension.</text>
</comment>
<comment type="subcellular location">
    <subcellularLocation>
        <location evidence="1">Virion</location>
    </subcellularLocation>
</comment>
<comment type="domain">
    <text evidence="2">The N-terminus like those of many plant virus capsid proteins is highly basic. These regions may be involved in protein-RNA interaction.</text>
</comment>
<comment type="similarity">
    <text evidence="4">Belongs to the luteoviruses capsid protein family.</text>
</comment>
<name>CAPSD_PLRVW</name>
<keyword id="KW-0167">Capsid protein</keyword>
<keyword id="KW-1142">T=3 icosahedral capsid protein</keyword>
<keyword id="KW-0946">Virion</keyword>
<accession>P11624</accession>
<organism>
    <name type="scientific">Potato leafroll virus (strain Potato/Netherlands/Wageningen/1989)</name>
    <name type="common">PLrV</name>
    <dbReference type="NCBI Taxonomy" id="12048"/>
    <lineage>
        <taxon>Viruses</taxon>
        <taxon>Riboviria</taxon>
        <taxon>Orthornavirae</taxon>
        <taxon>Pisuviricota</taxon>
        <taxon>Pisoniviricetes</taxon>
        <taxon>Sobelivirales</taxon>
        <taxon>Solemoviridae</taxon>
        <taxon>Polerovirus</taxon>
        <taxon>Potato leafroll virus</taxon>
    </lineage>
</organism>
<sequence length="208" mass="23234">MSTVVVKGNVNGGVQQPRRRRRQSLRRRANRVQPVVMVTAPGQPRRRRRRRGGNRRSRRTGVPRGRGSSETFVFTKDNLMGNSQGSFTFGPSLSDCPAFKDGILKAYHEYKITSILLQFVSEASSTSSGSIAYELDPHCKVSSLQSYVNQFQIPQGGAKTYQARMINGVEWHDSSEDQCRILWKGNGKSSDTAGSFRVTIRVALQNPK</sequence>
<organismHost>
    <name type="scientific">Solanum tuberosum</name>
    <name type="common">Potato</name>
    <dbReference type="NCBI Taxonomy" id="4113"/>
</organismHost>